<reference key="1">
    <citation type="journal article" date="2004" name="J. Biol. Chem.">
        <title>NOX3, a superoxide-generating NADPH oxidase of the inner ear.</title>
        <authorList>
            <person name="Banfi B."/>
            <person name="Malgrange B."/>
            <person name="Knisz J."/>
            <person name="Steger K."/>
            <person name="Dubois-Dauphin M."/>
            <person name="Krause K.-H."/>
        </authorList>
    </citation>
    <scope>NUCLEOTIDE SEQUENCE [MRNA]</scope>
    <scope>TISSUE SPECIFICITY</scope>
    <source>
        <strain>Sprague-Dawley</strain>
        <tissue>Inner ear</tissue>
    </source>
</reference>
<dbReference type="EC" id="1.6.3.-"/>
<dbReference type="EMBL" id="AY573239">
    <property type="protein sequence ID" value="AAT80343.1"/>
    <property type="molecule type" value="mRNA"/>
</dbReference>
<dbReference type="RefSeq" id="NP_001004216.1">
    <property type="nucleotide sequence ID" value="NM_001004216.1"/>
</dbReference>
<dbReference type="SMR" id="Q672K1"/>
<dbReference type="FunCoup" id="Q672K1">
    <property type="interactions" value="2"/>
</dbReference>
<dbReference type="STRING" id="10116.ENSRNOP00000022148"/>
<dbReference type="PeroxiBase" id="5407">
    <property type="entry name" value="RnoNOx03"/>
</dbReference>
<dbReference type="GlyCosmos" id="Q672K1">
    <property type="glycosylation" value="1 site, No reported glycans"/>
</dbReference>
<dbReference type="GlyGen" id="Q672K1">
    <property type="glycosylation" value="1 site"/>
</dbReference>
<dbReference type="PhosphoSitePlus" id="Q672K1"/>
<dbReference type="PaxDb" id="10116-ENSRNOP00000022148"/>
<dbReference type="Ensembl" id="ENSRNOT00000022148.5">
    <property type="protein sequence ID" value="ENSRNOP00000022148.3"/>
    <property type="gene ID" value="ENSRNOG00000016490.5"/>
</dbReference>
<dbReference type="GeneID" id="292279"/>
<dbReference type="KEGG" id="rno:292279"/>
<dbReference type="UCSC" id="RGD:1303190">
    <property type="organism name" value="rat"/>
</dbReference>
<dbReference type="AGR" id="RGD:1303190"/>
<dbReference type="CTD" id="50508"/>
<dbReference type="RGD" id="1303190">
    <property type="gene designation" value="Nox3"/>
</dbReference>
<dbReference type="eggNOG" id="KOG0039">
    <property type="taxonomic scope" value="Eukaryota"/>
</dbReference>
<dbReference type="GeneTree" id="ENSGT00940000160501"/>
<dbReference type="HOGENOM" id="CLU_005646_3_1_1"/>
<dbReference type="InParanoid" id="Q672K1"/>
<dbReference type="OMA" id="DENQAIH"/>
<dbReference type="OrthoDB" id="167398at2759"/>
<dbReference type="PhylomeDB" id="Q672K1"/>
<dbReference type="BRENDA" id="1.6.3.1">
    <property type="organism ID" value="5301"/>
</dbReference>
<dbReference type="Reactome" id="R-RNO-5668599">
    <property type="pathway name" value="RHO GTPases Activate NADPH Oxidases"/>
</dbReference>
<dbReference type="Reactome" id="R-RNO-9013149">
    <property type="pathway name" value="RAC1 GTPase cycle"/>
</dbReference>
<dbReference type="PRO" id="PR:Q672K1"/>
<dbReference type="Proteomes" id="UP000002494">
    <property type="component" value="Chromosome 1"/>
</dbReference>
<dbReference type="Bgee" id="ENSRNOG00000016490">
    <property type="expression patterns" value="Expressed in frontal cortex"/>
</dbReference>
<dbReference type="GO" id="GO:0005737">
    <property type="term" value="C:cytoplasm"/>
    <property type="evidence" value="ECO:0000266"/>
    <property type="project" value="RGD"/>
</dbReference>
<dbReference type="GO" id="GO:0043020">
    <property type="term" value="C:NADPH oxidase complex"/>
    <property type="evidence" value="ECO:0000266"/>
    <property type="project" value="RGD"/>
</dbReference>
<dbReference type="GO" id="GO:0005886">
    <property type="term" value="C:plasma membrane"/>
    <property type="evidence" value="ECO:0000250"/>
    <property type="project" value="UniProtKB"/>
</dbReference>
<dbReference type="GO" id="GO:0020037">
    <property type="term" value="F:heme binding"/>
    <property type="evidence" value="ECO:0000250"/>
    <property type="project" value="UniProtKB"/>
</dbReference>
<dbReference type="GO" id="GO:0046872">
    <property type="term" value="F:metal ion binding"/>
    <property type="evidence" value="ECO:0007669"/>
    <property type="project" value="UniProtKB-KW"/>
</dbReference>
<dbReference type="GO" id="GO:0016491">
    <property type="term" value="F:oxidoreductase activity"/>
    <property type="evidence" value="ECO:0000304"/>
    <property type="project" value="RGD"/>
</dbReference>
<dbReference type="GO" id="GO:0016175">
    <property type="term" value="F:superoxide-generating NAD(P)H oxidase activity"/>
    <property type="evidence" value="ECO:0000250"/>
    <property type="project" value="UniProtKB"/>
</dbReference>
<dbReference type="GO" id="GO:0106292">
    <property type="term" value="F:superoxide-generating NADPH oxidase activity"/>
    <property type="evidence" value="ECO:0007669"/>
    <property type="project" value="RHEA"/>
</dbReference>
<dbReference type="GO" id="GO:0006952">
    <property type="term" value="P:defense response"/>
    <property type="evidence" value="ECO:0000318"/>
    <property type="project" value="GO_Central"/>
</dbReference>
<dbReference type="GO" id="GO:0009590">
    <property type="term" value="P:detection of gravity"/>
    <property type="evidence" value="ECO:0000266"/>
    <property type="project" value="RGD"/>
</dbReference>
<dbReference type="GO" id="GO:0048840">
    <property type="term" value="P:otolith development"/>
    <property type="evidence" value="ECO:0000266"/>
    <property type="project" value="RGD"/>
</dbReference>
<dbReference type="GO" id="GO:0009629">
    <property type="term" value="P:response to gravity"/>
    <property type="evidence" value="ECO:0000266"/>
    <property type="project" value="RGD"/>
</dbReference>
<dbReference type="GO" id="GO:0042554">
    <property type="term" value="P:superoxide anion generation"/>
    <property type="evidence" value="ECO:0000318"/>
    <property type="project" value="GO_Central"/>
</dbReference>
<dbReference type="GO" id="GO:0001659">
    <property type="term" value="P:temperature homeostasis"/>
    <property type="evidence" value="ECO:0000266"/>
    <property type="project" value="RGD"/>
</dbReference>
<dbReference type="CDD" id="cd06186">
    <property type="entry name" value="NOX_Duox_like_FAD_NADP"/>
    <property type="match status" value="1"/>
</dbReference>
<dbReference type="FunFam" id="2.40.30.10:FF:000030">
    <property type="entry name" value="cytochrome b-245 heavy chain"/>
    <property type="match status" value="1"/>
</dbReference>
<dbReference type="FunFam" id="3.40.50.80:FF:000004">
    <property type="entry name" value="NADPH oxidase isoform 2"/>
    <property type="match status" value="1"/>
</dbReference>
<dbReference type="Gene3D" id="3.40.50.80">
    <property type="entry name" value="Nucleotide-binding domain of ferredoxin-NADP reductase (FNR) module"/>
    <property type="match status" value="1"/>
</dbReference>
<dbReference type="Gene3D" id="2.40.30.10">
    <property type="entry name" value="Translation factors"/>
    <property type="match status" value="1"/>
</dbReference>
<dbReference type="InterPro" id="IPR000778">
    <property type="entry name" value="Cyt_b245_heavy_chain"/>
</dbReference>
<dbReference type="InterPro" id="IPR013112">
    <property type="entry name" value="FAD-bd_8"/>
</dbReference>
<dbReference type="InterPro" id="IPR017927">
    <property type="entry name" value="FAD-bd_FR_type"/>
</dbReference>
<dbReference type="InterPro" id="IPR013130">
    <property type="entry name" value="Fe3_Rdtase_TM_dom"/>
</dbReference>
<dbReference type="InterPro" id="IPR013121">
    <property type="entry name" value="Fe_red_NAD-bd_6"/>
</dbReference>
<dbReference type="InterPro" id="IPR039261">
    <property type="entry name" value="FNR_nucleotide-bd"/>
</dbReference>
<dbReference type="InterPro" id="IPR050369">
    <property type="entry name" value="RBOH/FRE"/>
</dbReference>
<dbReference type="InterPro" id="IPR017938">
    <property type="entry name" value="Riboflavin_synthase-like_b-brl"/>
</dbReference>
<dbReference type="PANTHER" id="PTHR11972">
    <property type="entry name" value="NADPH OXIDASE"/>
    <property type="match status" value="1"/>
</dbReference>
<dbReference type="PANTHER" id="PTHR11972:SF12">
    <property type="entry name" value="NADPH OXIDASE 3"/>
    <property type="match status" value="1"/>
</dbReference>
<dbReference type="Pfam" id="PF08022">
    <property type="entry name" value="FAD_binding_8"/>
    <property type="match status" value="1"/>
</dbReference>
<dbReference type="Pfam" id="PF01794">
    <property type="entry name" value="Ferric_reduct"/>
    <property type="match status" value="1"/>
</dbReference>
<dbReference type="Pfam" id="PF08030">
    <property type="entry name" value="NAD_binding_6"/>
    <property type="match status" value="1"/>
</dbReference>
<dbReference type="PRINTS" id="PR00466">
    <property type="entry name" value="GP91PHOX"/>
</dbReference>
<dbReference type="SFLD" id="SFLDS00052">
    <property type="entry name" value="Ferric_Reductase_Domain"/>
    <property type="match status" value="1"/>
</dbReference>
<dbReference type="SFLD" id="SFLDG01168">
    <property type="entry name" value="Ferric_reductase_subgroup_(FRE"/>
    <property type="match status" value="1"/>
</dbReference>
<dbReference type="SUPFAM" id="SSF52343">
    <property type="entry name" value="Ferredoxin reductase-like, C-terminal NADP-linked domain"/>
    <property type="match status" value="1"/>
</dbReference>
<dbReference type="SUPFAM" id="SSF63380">
    <property type="entry name" value="Riboflavin synthase domain-like"/>
    <property type="match status" value="1"/>
</dbReference>
<dbReference type="PROSITE" id="PS51384">
    <property type="entry name" value="FAD_FR"/>
    <property type="match status" value="1"/>
</dbReference>
<gene>
    <name type="primary">Nox3</name>
</gene>
<feature type="chain" id="PRO_0000227598" description="NADPH oxidase 3">
    <location>
        <begin position="1"/>
        <end position="568"/>
    </location>
</feature>
<feature type="topological domain" description="Cytoplasmic" evidence="2">
    <location>
        <begin position="1"/>
        <end position="12"/>
    </location>
</feature>
<feature type="transmembrane region" description="Helical" evidence="2">
    <location>
        <begin position="13"/>
        <end position="33"/>
    </location>
</feature>
<feature type="topological domain" description="Extracellular" evidence="2">
    <location>
        <begin position="34"/>
        <end position="49"/>
    </location>
</feature>
<feature type="transmembrane region" description="Helical" evidence="2">
    <location>
        <begin position="50"/>
        <end position="70"/>
    </location>
</feature>
<feature type="topological domain" description="Cytoplasmic" evidence="2">
    <location>
        <begin position="71"/>
        <end position="103"/>
    </location>
</feature>
<feature type="transmembrane region" description="Helical" evidence="2">
    <location>
        <begin position="104"/>
        <end position="124"/>
    </location>
</feature>
<feature type="topological domain" description="Extracellular" evidence="2">
    <location>
        <begin position="125"/>
        <end position="167"/>
    </location>
</feature>
<feature type="transmembrane region" description="Helical" evidence="2">
    <location>
        <begin position="168"/>
        <end position="188"/>
    </location>
</feature>
<feature type="topological domain" description="Cytoplasmic" evidence="2">
    <location>
        <begin position="189"/>
        <end position="201"/>
    </location>
</feature>
<feature type="transmembrane region" description="Helical" evidence="2">
    <location>
        <begin position="202"/>
        <end position="222"/>
    </location>
</feature>
<feature type="topological domain" description="Extracellular" evidence="2">
    <location>
        <begin position="223"/>
        <end position="395"/>
    </location>
</feature>
<feature type="transmembrane region" description="Helical" evidence="2">
    <location>
        <begin position="396"/>
        <end position="416"/>
    </location>
</feature>
<feature type="topological domain" description="Cytoplasmic" evidence="2">
    <location>
        <begin position="417"/>
        <end position="568"/>
    </location>
</feature>
<feature type="domain" description="Ferric oxidoreductase">
    <location>
        <begin position="55"/>
        <end position="284"/>
    </location>
</feature>
<feature type="domain" description="FAD-binding FR-type" evidence="3">
    <location>
        <begin position="285"/>
        <end position="395"/>
    </location>
</feature>
<feature type="glycosylation site" description="N-linked (GlcNAc...) asparagine" evidence="2">
    <location>
        <position position="238"/>
    </location>
</feature>
<evidence type="ECO:0000250" key="1">
    <source>
        <dbReference type="UniProtKB" id="Q672J9"/>
    </source>
</evidence>
<evidence type="ECO:0000255" key="2"/>
<evidence type="ECO:0000255" key="3">
    <source>
        <dbReference type="PROSITE-ProRule" id="PRU00716"/>
    </source>
</evidence>
<evidence type="ECO:0000269" key="4">
    <source>
    </source>
</evidence>
<keyword id="KW-1003">Cell membrane</keyword>
<keyword id="KW-0325">Glycoprotein</keyword>
<keyword id="KW-0349">Heme</keyword>
<keyword id="KW-0408">Iron</keyword>
<keyword id="KW-0472">Membrane</keyword>
<keyword id="KW-0479">Metal-binding</keyword>
<keyword id="KW-0560">Oxidoreductase</keyword>
<keyword id="KW-1185">Reference proteome</keyword>
<keyword id="KW-0812">Transmembrane</keyword>
<keyword id="KW-1133">Transmembrane helix</keyword>
<organism>
    <name type="scientific">Rattus norvegicus</name>
    <name type="common">Rat</name>
    <dbReference type="NCBI Taxonomy" id="10116"/>
    <lineage>
        <taxon>Eukaryota</taxon>
        <taxon>Metazoa</taxon>
        <taxon>Chordata</taxon>
        <taxon>Craniata</taxon>
        <taxon>Vertebrata</taxon>
        <taxon>Euteleostomi</taxon>
        <taxon>Mammalia</taxon>
        <taxon>Eutheria</taxon>
        <taxon>Euarchontoglires</taxon>
        <taxon>Glires</taxon>
        <taxon>Rodentia</taxon>
        <taxon>Myomorpha</taxon>
        <taxon>Muroidea</taxon>
        <taxon>Muridae</taxon>
        <taxon>Murinae</taxon>
        <taxon>Rattus</taxon>
    </lineage>
</organism>
<sequence length="568" mass="64416">MPTCWILNESVSFVVALLWLAINIYLFIDTFCWYAEEESFFYTRVILGSALAWARASAVCLNFNCMLILLPVSRNFVSLVRGTSVCCRGPWRRQLDKNLKFHKLVAYGIAVNSVIHIVAHLFNLERYHLGQAKDAEGLLAALSKLGNAPNESYLNPVRTLYTGTTTQLLMTVSGITGLVISLALILIMTSSTEFIRQSSYELFWYTHHIFIFLFISLAIHGGGRIIRGQTPESLRLHNVTFCRDHFDEWQEAASCPVPQFSGKEPSAWKWTLGPVVLYACEIIIRFWRSHQEVVITKVVSHPSAVLELHMKKRDFKMAPGQYIFIQCPSISPLEWHPFTLTSAPQEDFFSVHIRASGDWTEALLKAFGAEGQAPSELCSMPRLAVDGPFGGSLADVFHYPVSVCIATGIGVTPFASLLKSVWYKCCESQSLPGLSKVYFYWICRDAAAFEWFADLLLSLETQMSEQGKAHLLSYHIYLTGWDEYQAIHIALHWDESLDVITGLKQKTFYGRPNWNEEFKQIAYNHPSSSIGVFFCGPKAMSKTLQKMCRLYSSSDPRGVHFYYNKENF</sequence>
<proteinExistence type="evidence at transcript level"/>
<name>NOX3_RAT</name>
<protein>
    <recommendedName>
        <fullName>NADPH oxidase 3</fullName>
        <ecNumber>1.6.3.-</ecNumber>
    </recommendedName>
</protein>
<comment type="function">
    <text evidence="1">NADPH oxidase that catalyzes the generation of superoxide from molecular oxygen utilizing NADPH as an electron donor, upon formation of a complex with CYBA/p22phox (By similarity). Plays a role in the biogenesis of otoconia/otolith, which are crystalline structures of the inner ear involved in the perception of gravity (By similarity).</text>
</comment>
<comment type="catalytic activity">
    <reaction evidence="1">
        <text>NADPH + 2 O2 = 2 superoxide + NADP(+) + H(+)</text>
        <dbReference type="Rhea" id="RHEA:63180"/>
        <dbReference type="ChEBI" id="CHEBI:15378"/>
        <dbReference type="ChEBI" id="CHEBI:15379"/>
        <dbReference type="ChEBI" id="CHEBI:18421"/>
        <dbReference type="ChEBI" id="CHEBI:57783"/>
        <dbReference type="ChEBI" id="CHEBI:58349"/>
    </reaction>
</comment>
<comment type="cofactor">
    <cofactor evidence="1">
        <name>heme</name>
        <dbReference type="ChEBI" id="CHEBI:30413"/>
    </cofactor>
</comment>
<comment type="activity regulation">
    <text evidence="1">Activated by the ototoxic drug cisplatin. Activated by NOXO1. Cooperatively activated by NCF1 and NCF2 or NOXA1 in a phorbol 12-myristate 13-acetate (PMA)-dependent manner. Inhibited by diphenyleneiodonium chloride (By similarity).</text>
</comment>
<comment type="subunit">
    <text evidence="1">Forms a heterodimer with CYBA/p22phox which is essential for its activity and cell membrane localization.</text>
</comment>
<comment type="subcellular location">
    <subcellularLocation>
        <location evidence="1">Cell membrane</location>
        <topology evidence="2">Multi-pass membrane protein</topology>
    </subcellularLocation>
</comment>
<comment type="tissue specificity">
    <text evidence="4">Expressed in the inner ear by the spiral glanglia and the organ of Corti.</text>
</comment>
<comment type="PTM">
    <text evidence="1">N-glycosylated in a CYBA/p22phox-dependent manner.</text>
</comment>
<accession>Q672K1</accession>